<feature type="chain" id="PRO_1000066592" description="Acyl carrier protein">
    <location>
        <begin position="1"/>
        <end position="76"/>
    </location>
</feature>
<feature type="domain" description="Carrier" evidence="2">
    <location>
        <begin position="1"/>
        <end position="74"/>
    </location>
</feature>
<feature type="modified residue" description="O-(pantetheine 4'-phosphoryl)serine" evidence="2">
    <location>
        <position position="34"/>
    </location>
</feature>
<keyword id="KW-0963">Cytoplasm</keyword>
<keyword id="KW-0275">Fatty acid biosynthesis</keyword>
<keyword id="KW-0276">Fatty acid metabolism</keyword>
<keyword id="KW-0444">Lipid biosynthesis</keyword>
<keyword id="KW-0443">Lipid metabolism</keyword>
<keyword id="KW-0596">Phosphopantetheine</keyword>
<keyword id="KW-0597">Phosphoprotein</keyword>
<sequence>MFDKLKEIIADKLSVNEDEITMESTFIDDLGADSLDIVELIMALEEELEMEIPDEDAEGFKTVGDVVEYITEHTEK</sequence>
<gene>
    <name evidence="1" type="primary">acpP</name>
    <name type="ordered locus">CPR_1691</name>
</gene>
<name>ACP_CLOPS</name>
<evidence type="ECO:0000255" key="1">
    <source>
        <dbReference type="HAMAP-Rule" id="MF_01217"/>
    </source>
</evidence>
<evidence type="ECO:0000255" key="2">
    <source>
        <dbReference type="PROSITE-ProRule" id="PRU00258"/>
    </source>
</evidence>
<dbReference type="EMBL" id="CP000312">
    <property type="protein sequence ID" value="ABG85722.1"/>
    <property type="molecule type" value="Genomic_DNA"/>
</dbReference>
<dbReference type="RefSeq" id="WP_003458423.1">
    <property type="nucleotide sequence ID" value="NZ_CAXVKH010000001.1"/>
</dbReference>
<dbReference type="SMR" id="Q0SSA1"/>
<dbReference type="GeneID" id="93001743"/>
<dbReference type="KEGG" id="cpr:CPR_1691"/>
<dbReference type="UniPathway" id="UPA00094"/>
<dbReference type="Proteomes" id="UP000001824">
    <property type="component" value="Chromosome"/>
</dbReference>
<dbReference type="GO" id="GO:0005829">
    <property type="term" value="C:cytosol"/>
    <property type="evidence" value="ECO:0007669"/>
    <property type="project" value="TreeGrafter"/>
</dbReference>
<dbReference type="GO" id="GO:0016020">
    <property type="term" value="C:membrane"/>
    <property type="evidence" value="ECO:0007669"/>
    <property type="project" value="GOC"/>
</dbReference>
<dbReference type="GO" id="GO:0000035">
    <property type="term" value="F:acyl binding"/>
    <property type="evidence" value="ECO:0007669"/>
    <property type="project" value="TreeGrafter"/>
</dbReference>
<dbReference type="GO" id="GO:0000036">
    <property type="term" value="F:acyl carrier activity"/>
    <property type="evidence" value="ECO:0007669"/>
    <property type="project" value="UniProtKB-UniRule"/>
</dbReference>
<dbReference type="GO" id="GO:0009245">
    <property type="term" value="P:lipid A biosynthetic process"/>
    <property type="evidence" value="ECO:0007669"/>
    <property type="project" value="TreeGrafter"/>
</dbReference>
<dbReference type="Gene3D" id="1.10.1200.10">
    <property type="entry name" value="ACP-like"/>
    <property type="match status" value="1"/>
</dbReference>
<dbReference type="HAMAP" id="MF_01217">
    <property type="entry name" value="Acyl_carrier"/>
    <property type="match status" value="1"/>
</dbReference>
<dbReference type="InterPro" id="IPR003231">
    <property type="entry name" value="ACP"/>
</dbReference>
<dbReference type="InterPro" id="IPR036736">
    <property type="entry name" value="ACP-like_sf"/>
</dbReference>
<dbReference type="InterPro" id="IPR009081">
    <property type="entry name" value="PP-bd_ACP"/>
</dbReference>
<dbReference type="InterPro" id="IPR006162">
    <property type="entry name" value="Ppantetheine_attach_site"/>
</dbReference>
<dbReference type="NCBIfam" id="TIGR00517">
    <property type="entry name" value="acyl_carrier"/>
    <property type="match status" value="1"/>
</dbReference>
<dbReference type="NCBIfam" id="NF002148">
    <property type="entry name" value="PRK00982.1-2"/>
    <property type="match status" value="1"/>
</dbReference>
<dbReference type="NCBIfam" id="NF002150">
    <property type="entry name" value="PRK00982.1-4"/>
    <property type="match status" value="1"/>
</dbReference>
<dbReference type="NCBIfam" id="NF002151">
    <property type="entry name" value="PRK00982.1-5"/>
    <property type="match status" value="1"/>
</dbReference>
<dbReference type="PANTHER" id="PTHR20863">
    <property type="entry name" value="ACYL CARRIER PROTEIN"/>
    <property type="match status" value="1"/>
</dbReference>
<dbReference type="PANTHER" id="PTHR20863:SF76">
    <property type="entry name" value="CARRIER DOMAIN-CONTAINING PROTEIN"/>
    <property type="match status" value="1"/>
</dbReference>
<dbReference type="Pfam" id="PF00550">
    <property type="entry name" value="PP-binding"/>
    <property type="match status" value="1"/>
</dbReference>
<dbReference type="SUPFAM" id="SSF47336">
    <property type="entry name" value="ACP-like"/>
    <property type="match status" value="1"/>
</dbReference>
<dbReference type="PROSITE" id="PS50075">
    <property type="entry name" value="CARRIER"/>
    <property type="match status" value="1"/>
</dbReference>
<dbReference type="PROSITE" id="PS00012">
    <property type="entry name" value="PHOSPHOPANTETHEINE"/>
    <property type="match status" value="1"/>
</dbReference>
<proteinExistence type="inferred from homology"/>
<protein>
    <recommendedName>
        <fullName evidence="1">Acyl carrier protein</fullName>
        <shortName evidence="1">ACP</shortName>
    </recommendedName>
</protein>
<organism>
    <name type="scientific">Clostridium perfringens (strain SM101 / Type A)</name>
    <dbReference type="NCBI Taxonomy" id="289380"/>
    <lineage>
        <taxon>Bacteria</taxon>
        <taxon>Bacillati</taxon>
        <taxon>Bacillota</taxon>
        <taxon>Clostridia</taxon>
        <taxon>Eubacteriales</taxon>
        <taxon>Clostridiaceae</taxon>
        <taxon>Clostridium</taxon>
    </lineage>
</organism>
<accession>Q0SSA1</accession>
<reference key="1">
    <citation type="journal article" date="2006" name="Genome Res.">
        <title>Skewed genomic variability in strains of the toxigenic bacterial pathogen, Clostridium perfringens.</title>
        <authorList>
            <person name="Myers G.S.A."/>
            <person name="Rasko D.A."/>
            <person name="Cheung J.K."/>
            <person name="Ravel J."/>
            <person name="Seshadri R."/>
            <person name="DeBoy R.T."/>
            <person name="Ren Q."/>
            <person name="Varga J."/>
            <person name="Awad M.M."/>
            <person name="Brinkac L.M."/>
            <person name="Daugherty S.C."/>
            <person name="Haft D.H."/>
            <person name="Dodson R.J."/>
            <person name="Madupu R."/>
            <person name="Nelson W.C."/>
            <person name="Rosovitz M.J."/>
            <person name="Sullivan S.A."/>
            <person name="Khouri H."/>
            <person name="Dimitrov G.I."/>
            <person name="Watkins K.L."/>
            <person name="Mulligan S."/>
            <person name="Benton J."/>
            <person name="Radune D."/>
            <person name="Fisher D.J."/>
            <person name="Atkins H.S."/>
            <person name="Hiscox T."/>
            <person name="Jost B.H."/>
            <person name="Billington S.J."/>
            <person name="Songer J.G."/>
            <person name="McClane B.A."/>
            <person name="Titball R.W."/>
            <person name="Rood J.I."/>
            <person name="Melville S.B."/>
            <person name="Paulsen I.T."/>
        </authorList>
    </citation>
    <scope>NUCLEOTIDE SEQUENCE [LARGE SCALE GENOMIC DNA]</scope>
    <source>
        <strain>SM101 / Type A</strain>
    </source>
</reference>
<comment type="function">
    <text evidence="1">Carrier of the growing fatty acid chain in fatty acid biosynthesis.</text>
</comment>
<comment type="pathway">
    <text evidence="1">Lipid metabolism; fatty acid biosynthesis.</text>
</comment>
<comment type="subcellular location">
    <subcellularLocation>
        <location evidence="1">Cytoplasm</location>
    </subcellularLocation>
</comment>
<comment type="PTM">
    <text evidence="1">4'-phosphopantetheine is transferred from CoA to a specific serine of apo-ACP by AcpS. This modification is essential for activity because fatty acids are bound in thioester linkage to the sulfhydryl of the prosthetic group.</text>
</comment>
<comment type="similarity">
    <text evidence="1">Belongs to the acyl carrier protein (ACP) family.</text>
</comment>